<accession>B2KWI3</accession>
<keyword id="KW-0067">ATP-binding</keyword>
<keyword id="KW-0436">Ligase</keyword>
<keyword id="KW-0547">Nucleotide-binding</keyword>
<keyword id="KW-0576">Peroxisome</keyword>
<sequence>MATISNETPLWRLQQTLNHILPQSVRKNEKHLAVVHGPTQPALWEMTLGELLEFQCLRYRDLEAVVVPWTAARWTYGQLENESSHLARGLLAKGIQRGDRIGVMAGNCEEYVSLFFAAARVGAILVVINNTYTDAELKYALSHTACKLLFIVPRIGRHDLKNALEDLHSPDISKRLPNLNETVMIQGSFKSFGTYKDVILAGNVVPLSAVQRRQDTLSPFDVCNLQFTSGSTGNPKASMLTHHNLINNSRFIGDRMDFTEYDILCCPPPLFHCFGLVLGLLACITHGAKVVYPAETFDPEAVLRAISDERCTALHGVPTMFEAILALSRPDSFDCSQLRTGIIAGAPVPRPLMKRLWNELNMTEFTSSYGLTEASPTCFNAFTSDSIATRLTTVGKVLPHASAKIINPETGETVKIGERGELCMSGYQIHKGYWGNLEKTAEALIEDEDGTIWLRTGDEAVFNSDGYCTITGRFKDIIIRGGENIYPLEIEERLTAHPAISRAAVVGLPNKHYGEIVGAFLVLEPGHTCPPDDEIKNWTRQTLGRHKAPKHVFVFGLDPRLPLDMPQTGSGKIQKQVLRDLGKRLVGEE</sequence>
<gene>
    <name evidence="4" type="primary">SID4</name>
</gene>
<evidence type="ECO:0000250" key="1">
    <source>
        <dbReference type="UniProtKB" id="Q08AH3"/>
    </source>
</evidence>
<evidence type="ECO:0000250" key="2">
    <source>
        <dbReference type="UniProtKB" id="Q4WR83"/>
    </source>
</evidence>
<evidence type="ECO:0000269" key="3">
    <source>
    </source>
</evidence>
<evidence type="ECO:0000303" key="4">
    <source>
    </source>
</evidence>
<evidence type="ECO:0000305" key="5"/>
<evidence type="ECO:0000305" key="6">
    <source>
    </source>
</evidence>
<feature type="chain" id="PRO_0000444398" description="Acyl-CoA ligase SID4">
    <location>
        <begin position="1"/>
        <end position="589"/>
    </location>
</feature>
<feature type="short sequence motif" description="PTS2-type peroxisomal targeting signal" evidence="2">
    <location>
        <begin position="12"/>
        <end position="20"/>
    </location>
</feature>
<feature type="binding site" evidence="1">
    <location>
        <begin position="228"/>
        <end position="236"/>
    </location>
    <ligand>
        <name>ATP</name>
        <dbReference type="ChEBI" id="CHEBI:30616"/>
    </ligand>
</feature>
<feature type="binding site" evidence="1">
    <location>
        <begin position="367"/>
        <end position="372"/>
    </location>
    <ligand>
        <name>ATP</name>
        <dbReference type="ChEBI" id="CHEBI:30616"/>
    </ligand>
</feature>
<feature type="binding site" evidence="1">
    <location>
        <position position="372"/>
    </location>
    <ligand>
        <name>substrate</name>
    </ligand>
</feature>
<feature type="binding site" evidence="1">
    <location>
        <position position="458"/>
    </location>
    <ligand>
        <name>ATP</name>
        <dbReference type="ChEBI" id="CHEBI:30616"/>
    </ligand>
</feature>
<feature type="binding site" evidence="1">
    <location>
        <position position="473"/>
    </location>
    <ligand>
        <name>ATP</name>
        <dbReference type="ChEBI" id="CHEBI:30616"/>
    </ligand>
</feature>
<feature type="binding site" evidence="1">
    <location>
        <begin position="481"/>
        <end position="483"/>
    </location>
    <ligand>
        <name>CoA</name>
        <dbReference type="ChEBI" id="CHEBI:57287"/>
    </ligand>
</feature>
<feature type="binding site" evidence="1">
    <location>
        <position position="547"/>
    </location>
    <ligand>
        <name>CoA</name>
        <dbReference type="ChEBI" id="CHEBI:57287"/>
    </ligand>
</feature>
<feature type="binding site" evidence="1">
    <location>
        <begin position="555"/>
        <end position="557"/>
    </location>
    <ligand>
        <name>CoA</name>
        <dbReference type="ChEBI" id="CHEBI:57287"/>
    </ligand>
</feature>
<feature type="binding site" evidence="1">
    <location>
        <position position="572"/>
    </location>
    <ligand>
        <name>ATP</name>
        <dbReference type="ChEBI" id="CHEBI:30616"/>
    </ligand>
</feature>
<proteinExistence type="evidence at transcript level"/>
<dbReference type="EC" id="6.2.1.-" evidence="6"/>
<dbReference type="EMBL" id="EU253978">
    <property type="protein sequence ID" value="ACC64456.1"/>
    <property type="molecule type" value="Genomic_DNA"/>
</dbReference>
<dbReference type="SMR" id="B2KWI3"/>
<dbReference type="GO" id="GO:0005777">
    <property type="term" value="C:peroxisome"/>
    <property type="evidence" value="ECO:0007669"/>
    <property type="project" value="UniProtKB-SubCell"/>
</dbReference>
<dbReference type="GO" id="GO:0005524">
    <property type="term" value="F:ATP binding"/>
    <property type="evidence" value="ECO:0007669"/>
    <property type="project" value="UniProtKB-KW"/>
</dbReference>
<dbReference type="GO" id="GO:0031956">
    <property type="term" value="F:medium-chain fatty acid-CoA ligase activity"/>
    <property type="evidence" value="ECO:0007669"/>
    <property type="project" value="TreeGrafter"/>
</dbReference>
<dbReference type="GO" id="GO:0006631">
    <property type="term" value="P:fatty acid metabolic process"/>
    <property type="evidence" value="ECO:0007669"/>
    <property type="project" value="TreeGrafter"/>
</dbReference>
<dbReference type="CDD" id="cd05917">
    <property type="entry name" value="FACL_like_2"/>
    <property type="match status" value="1"/>
</dbReference>
<dbReference type="FunFam" id="3.40.50.12780:FF:000003">
    <property type="entry name" value="Long-chain-fatty-acid--CoA ligase FadD"/>
    <property type="match status" value="1"/>
</dbReference>
<dbReference type="Gene3D" id="3.30.300.30">
    <property type="match status" value="1"/>
</dbReference>
<dbReference type="Gene3D" id="3.40.50.12780">
    <property type="entry name" value="N-terminal domain of ligase-like"/>
    <property type="match status" value="1"/>
</dbReference>
<dbReference type="InterPro" id="IPR025110">
    <property type="entry name" value="AMP-bd_C"/>
</dbReference>
<dbReference type="InterPro" id="IPR045851">
    <property type="entry name" value="AMP-bd_C_sf"/>
</dbReference>
<dbReference type="InterPro" id="IPR020845">
    <property type="entry name" value="AMP-binding_CS"/>
</dbReference>
<dbReference type="InterPro" id="IPR000873">
    <property type="entry name" value="AMP-dep_synth/lig_dom"/>
</dbReference>
<dbReference type="InterPro" id="IPR042099">
    <property type="entry name" value="ANL_N_sf"/>
</dbReference>
<dbReference type="PANTHER" id="PTHR43201:SF6">
    <property type="entry name" value="ACYL COA SYNTHETASE (EUROFUNG)"/>
    <property type="match status" value="1"/>
</dbReference>
<dbReference type="PANTHER" id="PTHR43201">
    <property type="entry name" value="ACYL-COA SYNTHETASE"/>
    <property type="match status" value="1"/>
</dbReference>
<dbReference type="Pfam" id="PF00501">
    <property type="entry name" value="AMP-binding"/>
    <property type="match status" value="1"/>
</dbReference>
<dbReference type="Pfam" id="PF13193">
    <property type="entry name" value="AMP-binding_C"/>
    <property type="match status" value="1"/>
</dbReference>
<dbReference type="SUPFAM" id="SSF56801">
    <property type="entry name" value="Acetyl-CoA synthetase-like"/>
    <property type="match status" value="1"/>
</dbReference>
<dbReference type="PROSITE" id="PS00455">
    <property type="entry name" value="AMP_BINDING"/>
    <property type="match status" value="1"/>
</dbReference>
<reference key="1">
    <citation type="journal article" date="2008" name="PLoS Pathog.">
        <title>Histoplasma requires SID1, a member of an iron-regulated siderophore gene cluster, for host colonization.</title>
        <authorList>
            <person name="Hwang L.H."/>
            <person name="Mayfield J.A."/>
            <person name="Rine J."/>
            <person name="Sil A."/>
        </authorList>
    </citation>
    <scope>NUCLEOTIDE SEQUENCE [GENOMIC DNA]</scope>
    <scope>FUNCTION</scope>
    <scope>INDUCTION</scope>
    <source>
        <strain>ATCC 26032 / G217B</strain>
    </source>
</reference>
<name>SID4_AJECA</name>
<organism>
    <name type="scientific">Ajellomyces capsulatus</name>
    <name type="common">Darling's disease fungus</name>
    <name type="synonym">Histoplasma capsulatum</name>
    <dbReference type="NCBI Taxonomy" id="5037"/>
    <lineage>
        <taxon>Eukaryota</taxon>
        <taxon>Fungi</taxon>
        <taxon>Dikarya</taxon>
        <taxon>Ascomycota</taxon>
        <taxon>Pezizomycotina</taxon>
        <taxon>Eurotiomycetes</taxon>
        <taxon>Eurotiomycetidae</taxon>
        <taxon>Onygenales</taxon>
        <taxon>Ajellomycetaceae</taxon>
        <taxon>Histoplasma</taxon>
    </lineage>
</organism>
<comment type="function">
    <text evidence="3">Acyl-CoA ligase; part of the gene cluster that mediates the biosynthesis of hydroxamate-containing siderophores that play a critical role in virulence via intracellular iron acquisition during macrophage infection (PubMed:18404210).</text>
</comment>
<comment type="pathway">
    <text evidence="6">Siderophore biosynthesis.</text>
</comment>
<comment type="subcellular location">
    <subcellularLocation>
        <location evidence="2">Peroxisome</location>
    </subcellularLocation>
    <text evidence="2">Targeted to peroxisomes via its PTS2-type peroxisomal targeting signal (By similarity).</text>
</comment>
<comment type="induction">
    <text evidence="3">Expression is induced during iron deprivation (PubMed:18404210).</text>
</comment>
<comment type="similarity">
    <text evidence="5">Belongs to the ATP-dependent AMP-binding enzyme family.</text>
</comment>
<protein>
    <recommendedName>
        <fullName evidence="4">Acyl-CoA ligase SID4</fullName>
        <ecNumber evidence="6">6.2.1.-</ecNumber>
    </recommendedName>
    <alternativeName>
        <fullName evidence="4">Siderophore biosynthesis cluster protein SID4</fullName>
    </alternativeName>
</protein>